<dbReference type="EMBL" id="AB240139">
    <property type="protein sequence ID" value="BAE48044.1"/>
    <property type="molecule type" value="Genomic_DNA"/>
</dbReference>
<dbReference type="RefSeq" id="YP_398905.1">
    <property type="nucleotide sequence ID" value="NC_007602.1"/>
</dbReference>
<dbReference type="SMR" id="Q33BZ1"/>
<dbReference type="GeneID" id="3776387"/>
<dbReference type="KEGG" id="nto:3776387"/>
<dbReference type="OrthoDB" id="2043at2759"/>
<dbReference type="GO" id="GO:0009507">
    <property type="term" value="C:chloroplast"/>
    <property type="evidence" value="ECO:0007669"/>
    <property type="project" value="UniProtKB-SubCell"/>
</dbReference>
<dbReference type="GO" id="GO:0005763">
    <property type="term" value="C:mitochondrial small ribosomal subunit"/>
    <property type="evidence" value="ECO:0007669"/>
    <property type="project" value="TreeGrafter"/>
</dbReference>
<dbReference type="GO" id="GO:0019843">
    <property type="term" value="F:rRNA binding"/>
    <property type="evidence" value="ECO:0007669"/>
    <property type="project" value="UniProtKB-UniRule"/>
</dbReference>
<dbReference type="GO" id="GO:0003735">
    <property type="term" value="F:structural constituent of ribosome"/>
    <property type="evidence" value="ECO:0007669"/>
    <property type="project" value="InterPro"/>
</dbReference>
<dbReference type="GO" id="GO:0000028">
    <property type="term" value="P:ribosomal small subunit assembly"/>
    <property type="evidence" value="ECO:0007669"/>
    <property type="project" value="TreeGrafter"/>
</dbReference>
<dbReference type="GO" id="GO:0006412">
    <property type="term" value="P:translation"/>
    <property type="evidence" value="ECO:0007669"/>
    <property type="project" value="UniProtKB-UniRule"/>
</dbReference>
<dbReference type="FunFam" id="3.30.860.10:FF:000001">
    <property type="entry name" value="30S ribosomal protein S19"/>
    <property type="match status" value="1"/>
</dbReference>
<dbReference type="Gene3D" id="3.30.860.10">
    <property type="entry name" value="30s Ribosomal Protein S19, Chain A"/>
    <property type="match status" value="1"/>
</dbReference>
<dbReference type="HAMAP" id="MF_00531">
    <property type="entry name" value="Ribosomal_uS19"/>
    <property type="match status" value="1"/>
</dbReference>
<dbReference type="InterPro" id="IPR002222">
    <property type="entry name" value="Ribosomal_uS19"/>
</dbReference>
<dbReference type="InterPro" id="IPR005732">
    <property type="entry name" value="Ribosomal_uS19_bac-type"/>
</dbReference>
<dbReference type="InterPro" id="IPR020934">
    <property type="entry name" value="Ribosomal_uS19_CS"/>
</dbReference>
<dbReference type="InterPro" id="IPR023575">
    <property type="entry name" value="Ribosomal_uS19_SF"/>
</dbReference>
<dbReference type="NCBIfam" id="TIGR01050">
    <property type="entry name" value="rpsS_bact"/>
    <property type="match status" value="1"/>
</dbReference>
<dbReference type="PANTHER" id="PTHR11880">
    <property type="entry name" value="RIBOSOMAL PROTEIN S19P FAMILY MEMBER"/>
    <property type="match status" value="1"/>
</dbReference>
<dbReference type="PANTHER" id="PTHR11880:SF8">
    <property type="entry name" value="SMALL RIBOSOMAL SUBUNIT PROTEIN US19M"/>
    <property type="match status" value="1"/>
</dbReference>
<dbReference type="Pfam" id="PF00203">
    <property type="entry name" value="Ribosomal_S19"/>
    <property type="match status" value="1"/>
</dbReference>
<dbReference type="PIRSF" id="PIRSF002144">
    <property type="entry name" value="Ribosomal_S19"/>
    <property type="match status" value="1"/>
</dbReference>
<dbReference type="PRINTS" id="PR00975">
    <property type="entry name" value="RIBOSOMALS19"/>
</dbReference>
<dbReference type="SUPFAM" id="SSF54570">
    <property type="entry name" value="Ribosomal protein S19"/>
    <property type="match status" value="1"/>
</dbReference>
<dbReference type="PROSITE" id="PS00323">
    <property type="entry name" value="RIBOSOMAL_S19"/>
    <property type="match status" value="1"/>
</dbReference>
<organism>
    <name type="scientific">Nicotiana tomentosiformis</name>
    <name type="common">Tobacco</name>
    <dbReference type="NCBI Taxonomy" id="4098"/>
    <lineage>
        <taxon>Eukaryota</taxon>
        <taxon>Viridiplantae</taxon>
        <taxon>Streptophyta</taxon>
        <taxon>Embryophyta</taxon>
        <taxon>Tracheophyta</taxon>
        <taxon>Spermatophyta</taxon>
        <taxon>Magnoliopsida</taxon>
        <taxon>eudicotyledons</taxon>
        <taxon>Gunneridae</taxon>
        <taxon>Pentapetalae</taxon>
        <taxon>asterids</taxon>
        <taxon>lamiids</taxon>
        <taxon>Solanales</taxon>
        <taxon>Solanaceae</taxon>
        <taxon>Nicotianoideae</taxon>
        <taxon>Nicotianeae</taxon>
        <taxon>Nicotiana</taxon>
    </lineage>
</organism>
<accession>Q33BZ1</accession>
<proteinExistence type="inferred from homology"/>
<geneLocation type="chloroplast"/>
<comment type="function">
    <text evidence="1">Protein S19 forms a complex with S13 that binds strongly to the 16S ribosomal RNA.</text>
</comment>
<comment type="subcellular location">
    <subcellularLocation>
        <location>Plastid</location>
        <location>Chloroplast</location>
    </subcellularLocation>
</comment>
<comment type="similarity">
    <text evidence="1">Belongs to the universal ribosomal protein uS19 family.</text>
</comment>
<gene>
    <name evidence="1" type="primary">rps19</name>
</gene>
<feature type="chain" id="PRO_0000276915" description="Small ribosomal subunit protein uS19c">
    <location>
        <begin position="1"/>
        <end position="92"/>
    </location>
</feature>
<evidence type="ECO:0000255" key="1">
    <source>
        <dbReference type="HAMAP-Rule" id="MF_00531"/>
    </source>
</evidence>
<evidence type="ECO:0000305" key="2"/>
<name>RR19_NICTO</name>
<reference key="1">
    <citation type="journal article" date="2006" name="Mol. Genet. Genomics">
        <title>The chloroplast genome of Nicotiana sylvestris and Nicotiana tomentosiformis: complete sequencing confirms that the Nicotiana sylvestris progenitor is the maternal genome donor of Nicotiana tabacum.</title>
        <authorList>
            <person name="Yukawa M."/>
            <person name="Tsudzuki T."/>
            <person name="Sugiura M."/>
        </authorList>
    </citation>
    <scope>NUCLEOTIDE SEQUENCE [LARGE SCALE GENOMIC DNA]</scope>
</reference>
<protein>
    <recommendedName>
        <fullName evidence="1">Small ribosomal subunit protein uS19c</fullName>
    </recommendedName>
    <alternativeName>
        <fullName evidence="2">30S ribosomal protein S19, chloroplastic</fullName>
    </alternativeName>
</protein>
<keyword id="KW-0150">Chloroplast</keyword>
<keyword id="KW-0934">Plastid</keyword>
<keyword id="KW-0687">Ribonucleoprotein</keyword>
<keyword id="KW-0689">Ribosomal protein</keyword>
<keyword id="KW-0694">RNA-binding</keyword>
<keyword id="KW-0699">rRNA-binding</keyword>
<sequence>MTRSLKKNPFVANHLLKKIEKLNTKAEKEIIVTWSRASTIIPTMIGHTIAIHNGKEHLPIYITDSMVGHKLGEFAPTLNFRGHAKSDNRSRR</sequence>